<dbReference type="EMBL" id="CP001616">
    <property type="protein sequence ID" value="ACQ93984.1"/>
    <property type="molecule type" value="Genomic_DNA"/>
</dbReference>
<dbReference type="RefSeq" id="WP_015879452.1">
    <property type="nucleotide sequence ID" value="NC_012691.1"/>
</dbReference>
<dbReference type="SMR" id="C4L9N1"/>
<dbReference type="STRING" id="595494.Tola_2387"/>
<dbReference type="KEGG" id="tau:Tola_2387"/>
<dbReference type="eggNOG" id="COG0323">
    <property type="taxonomic scope" value="Bacteria"/>
</dbReference>
<dbReference type="HOGENOM" id="CLU_004131_5_1_6"/>
<dbReference type="OrthoDB" id="9763467at2"/>
<dbReference type="Proteomes" id="UP000009073">
    <property type="component" value="Chromosome"/>
</dbReference>
<dbReference type="GO" id="GO:0032300">
    <property type="term" value="C:mismatch repair complex"/>
    <property type="evidence" value="ECO:0007669"/>
    <property type="project" value="InterPro"/>
</dbReference>
<dbReference type="GO" id="GO:0005524">
    <property type="term" value="F:ATP binding"/>
    <property type="evidence" value="ECO:0007669"/>
    <property type="project" value="InterPro"/>
</dbReference>
<dbReference type="GO" id="GO:0016887">
    <property type="term" value="F:ATP hydrolysis activity"/>
    <property type="evidence" value="ECO:0007669"/>
    <property type="project" value="InterPro"/>
</dbReference>
<dbReference type="GO" id="GO:0140664">
    <property type="term" value="F:ATP-dependent DNA damage sensor activity"/>
    <property type="evidence" value="ECO:0007669"/>
    <property type="project" value="InterPro"/>
</dbReference>
<dbReference type="GO" id="GO:0030983">
    <property type="term" value="F:mismatched DNA binding"/>
    <property type="evidence" value="ECO:0007669"/>
    <property type="project" value="InterPro"/>
</dbReference>
<dbReference type="GO" id="GO:0006298">
    <property type="term" value="P:mismatch repair"/>
    <property type="evidence" value="ECO:0007669"/>
    <property type="project" value="UniProtKB-UniRule"/>
</dbReference>
<dbReference type="CDD" id="cd16926">
    <property type="entry name" value="HATPase_MutL-MLH-PMS-like"/>
    <property type="match status" value="1"/>
</dbReference>
<dbReference type="CDD" id="cd03482">
    <property type="entry name" value="MutL_Trans_MutL"/>
    <property type="match status" value="1"/>
</dbReference>
<dbReference type="FunFam" id="3.30.565.10:FF:000003">
    <property type="entry name" value="DNA mismatch repair endonuclease MutL"/>
    <property type="match status" value="1"/>
</dbReference>
<dbReference type="Gene3D" id="3.30.230.10">
    <property type="match status" value="1"/>
</dbReference>
<dbReference type="Gene3D" id="3.30.565.10">
    <property type="entry name" value="Histidine kinase-like ATPase, C-terminal domain"/>
    <property type="match status" value="1"/>
</dbReference>
<dbReference type="Gene3D" id="3.30.1540.20">
    <property type="entry name" value="MutL, C-terminal domain, dimerisation subdomain"/>
    <property type="match status" value="1"/>
</dbReference>
<dbReference type="Gene3D" id="3.30.1370.100">
    <property type="entry name" value="MutL, C-terminal domain, regulatory subdomain"/>
    <property type="match status" value="1"/>
</dbReference>
<dbReference type="HAMAP" id="MF_00149">
    <property type="entry name" value="DNA_mis_repair"/>
    <property type="match status" value="1"/>
</dbReference>
<dbReference type="InterPro" id="IPR014762">
    <property type="entry name" value="DNA_mismatch_repair_CS"/>
</dbReference>
<dbReference type="InterPro" id="IPR020667">
    <property type="entry name" value="DNA_mismatch_repair_MutL"/>
</dbReference>
<dbReference type="InterPro" id="IPR013507">
    <property type="entry name" value="DNA_mismatch_S5_2-like"/>
</dbReference>
<dbReference type="InterPro" id="IPR036890">
    <property type="entry name" value="HATPase_C_sf"/>
</dbReference>
<dbReference type="InterPro" id="IPR002099">
    <property type="entry name" value="MutL/Mlh/PMS"/>
</dbReference>
<dbReference type="InterPro" id="IPR038973">
    <property type="entry name" value="MutL/Mlh/Pms-like"/>
</dbReference>
<dbReference type="InterPro" id="IPR014790">
    <property type="entry name" value="MutL_C"/>
</dbReference>
<dbReference type="InterPro" id="IPR042120">
    <property type="entry name" value="MutL_C_dimsub"/>
</dbReference>
<dbReference type="InterPro" id="IPR042121">
    <property type="entry name" value="MutL_C_regsub"/>
</dbReference>
<dbReference type="InterPro" id="IPR037198">
    <property type="entry name" value="MutL_C_sf"/>
</dbReference>
<dbReference type="InterPro" id="IPR020568">
    <property type="entry name" value="Ribosomal_Su5_D2-typ_SF"/>
</dbReference>
<dbReference type="InterPro" id="IPR014721">
    <property type="entry name" value="Ribsml_uS5_D2-typ_fold_subgr"/>
</dbReference>
<dbReference type="NCBIfam" id="TIGR00585">
    <property type="entry name" value="mutl"/>
    <property type="match status" value="1"/>
</dbReference>
<dbReference type="PANTHER" id="PTHR10073">
    <property type="entry name" value="DNA MISMATCH REPAIR PROTEIN MLH, PMS, MUTL"/>
    <property type="match status" value="1"/>
</dbReference>
<dbReference type="PANTHER" id="PTHR10073:SF12">
    <property type="entry name" value="DNA MISMATCH REPAIR PROTEIN MLH1"/>
    <property type="match status" value="1"/>
</dbReference>
<dbReference type="Pfam" id="PF01119">
    <property type="entry name" value="DNA_mis_repair"/>
    <property type="match status" value="1"/>
</dbReference>
<dbReference type="Pfam" id="PF13589">
    <property type="entry name" value="HATPase_c_3"/>
    <property type="match status" value="1"/>
</dbReference>
<dbReference type="Pfam" id="PF08676">
    <property type="entry name" value="MutL_C"/>
    <property type="match status" value="1"/>
</dbReference>
<dbReference type="SMART" id="SM01340">
    <property type="entry name" value="DNA_mis_repair"/>
    <property type="match status" value="1"/>
</dbReference>
<dbReference type="SMART" id="SM00853">
    <property type="entry name" value="MutL_C"/>
    <property type="match status" value="1"/>
</dbReference>
<dbReference type="SUPFAM" id="SSF55874">
    <property type="entry name" value="ATPase domain of HSP90 chaperone/DNA topoisomerase II/histidine kinase"/>
    <property type="match status" value="1"/>
</dbReference>
<dbReference type="SUPFAM" id="SSF118116">
    <property type="entry name" value="DNA mismatch repair protein MutL"/>
    <property type="match status" value="1"/>
</dbReference>
<dbReference type="SUPFAM" id="SSF54211">
    <property type="entry name" value="Ribosomal protein S5 domain 2-like"/>
    <property type="match status" value="1"/>
</dbReference>
<dbReference type="PROSITE" id="PS00058">
    <property type="entry name" value="DNA_MISMATCH_REPAIR_1"/>
    <property type="match status" value="1"/>
</dbReference>
<sequence>MPIQILPPILANQIAAGEVVERPASVIKELVENSLDAGANRIDVELEKGGCQLIRVRDNGGGICGTELALALARHATSKVATLDDLEHIASLGFRGEALASISSVSRLTLTSRTAGQHEAWQAYAEGREMAVTVKPAAHPVGTTVEVLDLFFNTPARRRFLRSEKTEFAHIDELLRRLALSRFDVAINLKHNGKLLRQYRPAQTESQQEQRVVQACGAEFMQAALRIDSEHLGLHLYGWLAPQPLTAINEVQYCYVNGRMIRDKLLNHAIRQAYSECTGTSFQPAYILYLELDPHQVDVNVHPSKHEVRFHESRQVHDFIVQVIRQALQTAYSENAPDAVFSGIEDAAPDYPVSPLKNRATGQHQYSAPTGGYSSPSGSQLRSYGQLLTSELPSIPVSREAGSVAAPDNSDWPVLRLIQQRYLLSAQDDTLYLSDLVAIQSLQWLTQCNASFNEGLIAQPLLIPQRLDIARPHEWLAEYGIWLQKLGLRYNTHKNKQIIIQAVPALLRQTDMASTIPAMLSLLERYPVALSHQEWHSFIATWLKLPGLIPHHYSMDSARSLWLWLQQNVADWQNNTQLMRSVDLTNILEVFSRD</sequence>
<proteinExistence type="inferred from homology"/>
<comment type="function">
    <text evidence="1">This protein is involved in the repair of mismatches in DNA. It is required for dam-dependent methyl-directed DNA mismatch repair. May act as a 'molecular matchmaker', a protein that promotes the formation of a stable complex between two or more DNA-binding proteins in an ATP-dependent manner without itself being part of a final effector complex.</text>
</comment>
<comment type="similarity">
    <text evidence="1">Belongs to the DNA mismatch repair MutL/HexB family.</text>
</comment>
<organism>
    <name type="scientific">Tolumonas auensis (strain DSM 9187 / NBRC 110442 / TA 4)</name>
    <dbReference type="NCBI Taxonomy" id="595494"/>
    <lineage>
        <taxon>Bacteria</taxon>
        <taxon>Pseudomonadati</taxon>
        <taxon>Pseudomonadota</taxon>
        <taxon>Gammaproteobacteria</taxon>
        <taxon>Aeromonadales</taxon>
        <taxon>Aeromonadaceae</taxon>
        <taxon>Tolumonas</taxon>
    </lineage>
</organism>
<protein>
    <recommendedName>
        <fullName evidence="1">DNA mismatch repair protein MutL</fullName>
    </recommendedName>
</protein>
<evidence type="ECO:0000255" key="1">
    <source>
        <dbReference type="HAMAP-Rule" id="MF_00149"/>
    </source>
</evidence>
<gene>
    <name evidence="1" type="primary">mutL</name>
    <name type="ordered locus">Tola_2387</name>
</gene>
<feature type="chain" id="PRO_1000203399" description="DNA mismatch repair protein MutL">
    <location>
        <begin position="1"/>
        <end position="594"/>
    </location>
</feature>
<accession>C4L9N1</accession>
<reference key="1">
    <citation type="submission" date="2009-05" db="EMBL/GenBank/DDBJ databases">
        <title>Complete sequence of Tolumonas auensis DSM 9187.</title>
        <authorList>
            <consortium name="US DOE Joint Genome Institute"/>
            <person name="Lucas S."/>
            <person name="Copeland A."/>
            <person name="Lapidus A."/>
            <person name="Glavina del Rio T."/>
            <person name="Tice H."/>
            <person name="Bruce D."/>
            <person name="Goodwin L."/>
            <person name="Pitluck S."/>
            <person name="Chertkov O."/>
            <person name="Brettin T."/>
            <person name="Detter J.C."/>
            <person name="Han C."/>
            <person name="Larimer F."/>
            <person name="Land M."/>
            <person name="Hauser L."/>
            <person name="Kyrpides N."/>
            <person name="Mikhailova N."/>
            <person name="Spring S."/>
            <person name="Beller H."/>
        </authorList>
    </citation>
    <scope>NUCLEOTIDE SEQUENCE [LARGE SCALE GENOMIC DNA]</scope>
    <source>
        <strain>DSM 9187 / NBRC 110442 / TA 4</strain>
    </source>
</reference>
<keyword id="KW-0227">DNA damage</keyword>
<keyword id="KW-0234">DNA repair</keyword>
<keyword id="KW-1185">Reference proteome</keyword>
<name>MUTL_TOLAT</name>